<reference key="1">
    <citation type="journal article" date="2008" name="Genome Res.">
        <title>The genome of Pelotomaculum thermopropionicum reveals niche-associated evolution in anaerobic microbiota.</title>
        <authorList>
            <person name="Kosaka T."/>
            <person name="Kato S."/>
            <person name="Shimoyama T."/>
            <person name="Ishii S."/>
            <person name="Abe T."/>
            <person name="Watanabe K."/>
        </authorList>
    </citation>
    <scope>NUCLEOTIDE SEQUENCE [LARGE SCALE GENOMIC DNA]</scope>
    <source>
        <strain>DSM 13744 / JCM 10971 / SI</strain>
    </source>
</reference>
<proteinExistence type="inferred from homology"/>
<accession>A5D5J4</accession>
<comment type="function">
    <text evidence="1">Protein S19 forms a complex with S13 that binds strongly to the 16S ribosomal RNA.</text>
</comment>
<comment type="similarity">
    <text evidence="1">Belongs to the universal ribosomal protein uS19 family.</text>
</comment>
<feature type="chain" id="PRO_1000081781" description="Small ribosomal subunit protein uS19">
    <location>
        <begin position="1"/>
        <end position="94"/>
    </location>
</feature>
<organism>
    <name type="scientific">Pelotomaculum thermopropionicum (strain DSM 13744 / JCM 10971 / SI)</name>
    <dbReference type="NCBI Taxonomy" id="370438"/>
    <lineage>
        <taxon>Bacteria</taxon>
        <taxon>Bacillati</taxon>
        <taxon>Bacillota</taxon>
        <taxon>Clostridia</taxon>
        <taxon>Eubacteriales</taxon>
        <taxon>Desulfotomaculaceae</taxon>
        <taxon>Pelotomaculum</taxon>
    </lineage>
</organism>
<name>RS19_PELTS</name>
<gene>
    <name evidence="1" type="primary">rpsS</name>
    <name type="ordered locus">PTH_0324</name>
</gene>
<protein>
    <recommendedName>
        <fullName evidence="1">Small ribosomal subunit protein uS19</fullName>
    </recommendedName>
    <alternativeName>
        <fullName evidence="2">30S ribosomal protein S19</fullName>
    </alternativeName>
</protein>
<keyword id="KW-1185">Reference proteome</keyword>
<keyword id="KW-0687">Ribonucleoprotein</keyword>
<keyword id="KW-0689">Ribosomal protein</keyword>
<keyword id="KW-0694">RNA-binding</keyword>
<keyword id="KW-0699">rRNA-binding</keyword>
<dbReference type="EMBL" id="AP009389">
    <property type="protein sequence ID" value="BAF58505.1"/>
    <property type="molecule type" value="Genomic_DNA"/>
</dbReference>
<dbReference type="SMR" id="A5D5J4"/>
<dbReference type="STRING" id="370438.PTH_0324"/>
<dbReference type="KEGG" id="pth:PTH_0324"/>
<dbReference type="eggNOG" id="COG0185">
    <property type="taxonomic scope" value="Bacteria"/>
</dbReference>
<dbReference type="HOGENOM" id="CLU_144911_0_1_9"/>
<dbReference type="Proteomes" id="UP000006556">
    <property type="component" value="Chromosome"/>
</dbReference>
<dbReference type="GO" id="GO:0005737">
    <property type="term" value="C:cytoplasm"/>
    <property type="evidence" value="ECO:0007669"/>
    <property type="project" value="UniProtKB-ARBA"/>
</dbReference>
<dbReference type="GO" id="GO:0015935">
    <property type="term" value="C:small ribosomal subunit"/>
    <property type="evidence" value="ECO:0007669"/>
    <property type="project" value="InterPro"/>
</dbReference>
<dbReference type="GO" id="GO:0019843">
    <property type="term" value="F:rRNA binding"/>
    <property type="evidence" value="ECO:0007669"/>
    <property type="project" value="UniProtKB-UniRule"/>
</dbReference>
<dbReference type="GO" id="GO:0003735">
    <property type="term" value="F:structural constituent of ribosome"/>
    <property type="evidence" value="ECO:0007669"/>
    <property type="project" value="InterPro"/>
</dbReference>
<dbReference type="GO" id="GO:0000028">
    <property type="term" value="P:ribosomal small subunit assembly"/>
    <property type="evidence" value="ECO:0007669"/>
    <property type="project" value="TreeGrafter"/>
</dbReference>
<dbReference type="GO" id="GO:0006412">
    <property type="term" value="P:translation"/>
    <property type="evidence" value="ECO:0007669"/>
    <property type="project" value="UniProtKB-UniRule"/>
</dbReference>
<dbReference type="FunFam" id="3.30.860.10:FF:000001">
    <property type="entry name" value="30S ribosomal protein S19"/>
    <property type="match status" value="1"/>
</dbReference>
<dbReference type="Gene3D" id="3.30.860.10">
    <property type="entry name" value="30s Ribosomal Protein S19, Chain A"/>
    <property type="match status" value="1"/>
</dbReference>
<dbReference type="HAMAP" id="MF_00531">
    <property type="entry name" value="Ribosomal_uS19"/>
    <property type="match status" value="1"/>
</dbReference>
<dbReference type="InterPro" id="IPR002222">
    <property type="entry name" value="Ribosomal_uS19"/>
</dbReference>
<dbReference type="InterPro" id="IPR005732">
    <property type="entry name" value="Ribosomal_uS19_bac-type"/>
</dbReference>
<dbReference type="InterPro" id="IPR020934">
    <property type="entry name" value="Ribosomal_uS19_CS"/>
</dbReference>
<dbReference type="InterPro" id="IPR023575">
    <property type="entry name" value="Ribosomal_uS19_SF"/>
</dbReference>
<dbReference type="NCBIfam" id="TIGR01050">
    <property type="entry name" value="rpsS_bact"/>
    <property type="match status" value="1"/>
</dbReference>
<dbReference type="PANTHER" id="PTHR11880">
    <property type="entry name" value="RIBOSOMAL PROTEIN S19P FAMILY MEMBER"/>
    <property type="match status" value="1"/>
</dbReference>
<dbReference type="PANTHER" id="PTHR11880:SF8">
    <property type="entry name" value="SMALL RIBOSOMAL SUBUNIT PROTEIN US19M"/>
    <property type="match status" value="1"/>
</dbReference>
<dbReference type="Pfam" id="PF00203">
    <property type="entry name" value="Ribosomal_S19"/>
    <property type="match status" value="1"/>
</dbReference>
<dbReference type="PIRSF" id="PIRSF002144">
    <property type="entry name" value="Ribosomal_S19"/>
    <property type="match status" value="1"/>
</dbReference>
<dbReference type="PRINTS" id="PR00975">
    <property type="entry name" value="RIBOSOMALS19"/>
</dbReference>
<dbReference type="SUPFAM" id="SSF54570">
    <property type="entry name" value="Ribosomal protein S19"/>
    <property type="match status" value="1"/>
</dbReference>
<dbReference type="PROSITE" id="PS00323">
    <property type="entry name" value="RIBOSOMAL_S19"/>
    <property type="match status" value="1"/>
</dbReference>
<evidence type="ECO:0000255" key="1">
    <source>
        <dbReference type="HAMAP-Rule" id="MF_00531"/>
    </source>
</evidence>
<evidence type="ECO:0000305" key="2"/>
<sequence length="94" mass="10614">MSRSLKKGPYCDARLLAKIEKMNETGEKRVIKTWSRASTIFPQMVGHTIAVHDGRKHVPVYITEDMVGHKLGEFAPTRIFRGHGAHTERSTALK</sequence>